<protein>
    <recommendedName>
        <fullName evidence="1">Arginine N-succinyltransferase</fullName>
        <shortName evidence="1">AST</shortName>
        <ecNumber evidence="1">2.3.1.109</ecNumber>
    </recommendedName>
    <alternativeName>
        <fullName evidence="1">AOST</fullName>
    </alternativeName>
</protein>
<comment type="function">
    <text evidence="1">Catalyzes the transfer of succinyl-CoA to arginine to produce N(2)-succinylarginine.</text>
</comment>
<comment type="catalytic activity">
    <reaction evidence="1">
        <text>succinyl-CoA + L-arginine = N(2)-succinyl-L-arginine + CoA + H(+)</text>
        <dbReference type="Rhea" id="RHEA:15185"/>
        <dbReference type="ChEBI" id="CHEBI:15378"/>
        <dbReference type="ChEBI" id="CHEBI:32682"/>
        <dbReference type="ChEBI" id="CHEBI:57287"/>
        <dbReference type="ChEBI" id="CHEBI:57292"/>
        <dbReference type="ChEBI" id="CHEBI:58241"/>
        <dbReference type="EC" id="2.3.1.109"/>
    </reaction>
</comment>
<comment type="pathway">
    <text evidence="1">Amino-acid degradation; L-arginine degradation via AST pathway; L-glutamate and succinate from L-arginine: step 1/5.</text>
</comment>
<comment type="similarity">
    <text evidence="1">Belongs to the arginine N-succinyltransferase family.</text>
</comment>
<keyword id="KW-0012">Acyltransferase</keyword>
<keyword id="KW-0056">Arginine metabolism</keyword>
<keyword id="KW-0808">Transferase</keyword>
<accession>A4TJU6</accession>
<reference key="1">
    <citation type="submission" date="2007-02" db="EMBL/GenBank/DDBJ databases">
        <title>Complete sequence of chromosome of Yersinia pestis Pestoides F.</title>
        <authorList>
            <consortium name="US DOE Joint Genome Institute"/>
            <person name="Copeland A."/>
            <person name="Lucas S."/>
            <person name="Lapidus A."/>
            <person name="Barry K."/>
            <person name="Detter J.C."/>
            <person name="Glavina del Rio T."/>
            <person name="Hammon N."/>
            <person name="Israni S."/>
            <person name="Dalin E."/>
            <person name="Tice H."/>
            <person name="Pitluck S."/>
            <person name="Di Bartolo G."/>
            <person name="Chain P."/>
            <person name="Malfatti S."/>
            <person name="Shin M."/>
            <person name="Vergez L."/>
            <person name="Schmutz J."/>
            <person name="Larimer F."/>
            <person name="Land M."/>
            <person name="Hauser L."/>
            <person name="Worsham P."/>
            <person name="Chu M."/>
            <person name="Bearden S."/>
            <person name="Garcia E."/>
            <person name="Richardson P."/>
        </authorList>
    </citation>
    <scope>NUCLEOTIDE SEQUENCE [LARGE SCALE GENOMIC DNA]</scope>
    <source>
        <strain>Pestoides F</strain>
    </source>
</reference>
<gene>
    <name evidence="1" type="primary">astA</name>
    <name type="ordered locus">YPDSF_1160</name>
</gene>
<evidence type="ECO:0000255" key="1">
    <source>
        <dbReference type="HAMAP-Rule" id="MF_01171"/>
    </source>
</evidence>
<proteinExistence type="inferred from homology"/>
<name>ASTA_YERPP</name>
<feature type="chain" id="PRO_1000065712" description="Arginine N-succinyltransferase">
    <location>
        <begin position="1"/>
        <end position="350"/>
    </location>
</feature>
<feature type="active site" description="Proton donor" evidence="1">
    <location>
        <position position="229"/>
    </location>
</feature>
<feature type="binding site" evidence="1">
    <location>
        <position position="125"/>
    </location>
    <ligand>
        <name>succinyl-CoA</name>
        <dbReference type="ChEBI" id="CHEBI:57292"/>
    </ligand>
</feature>
<organism>
    <name type="scientific">Yersinia pestis (strain Pestoides F)</name>
    <dbReference type="NCBI Taxonomy" id="386656"/>
    <lineage>
        <taxon>Bacteria</taxon>
        <taxon>Pseudomonadati</taxon>
        <taxon>Pseudomonadota</taxon>
        <taxon>Gammaproteobacteria</taxon>
        <taxon>Enterobacterales</taxon>
        <taxon>Yersiniaceae</taxon>
        <taxon>Yersinia</taxon>
    </lineage>
</organism>
<sequence>MMKVRPVERRDLADIFELAGKTGVGMTSLPQNEQHLAARIERALNTWQGSLDPGEQGYLFVLEDSEQQKVVGVSAIEVAVGLNDPWYNFRVGTLVHASKALNVYKSVPTLFLSNDHTGYSELCTLFLDPDYRKDKNGPFLSKVRFLFIAAFRQYFSRKVIAEMRGYTDEQGRSPFWESVGRHFFSIEFAKADYLSGTGQKAFIAELMPKHPLYVDFLAEEARAVIGQVHPHTAPARAVLETEGLQYQGYVDIFDGGPTLEANTDDVRVVRDSSKRTVVIKDYDIEDYDIDPNGRLYLVANDHYHHFRAILMNTHLSDERLRLTPESAEALGVAAGDSVRIVSLFAPETKR</sequence>
<dbReference type="EC" id="2.3.1.109" evidence="1"/>
<dbReference type="EMBL" id="CP000668">
    <property type="protein sequence ID" value="ABP39558.1"/>
    <property type="molecule type" value="Genomic_DNA"/>
</dbReference>
<dbReference type="RefSeq" id="WP_002212031.1">
    <property type="nucleotide sequence ID" value="NZ_CP009715.1"/>
</dbReference>
<dbReference type="SMR" id="A4TJU6"/>
<dbReference type="KEGG" id="ypp:YPDSF_1160"/>
<dbReference type="PATRIC" id="fig|386656.14.peg.2665"/>
<dbReference type="UniPathway" id="UPA00185">
    <property type="reaction ID" value="UER00279"/>
</dbReference>
<dbReference type="GO" id="GO:0008791">
    <property type="term" value="F:arginine N-succinyltransferase activity"/>
    <property type="evidence" value="ECO:0007669"/>
    <property type="project" value="UniProtKB-UniRule"/>
</dbReference>
<dbReference type="GO" id="GO:0019544">
    <property type="term" value="P:arginine catabolic process to glutamate"/>
    <property type="evidence" value="ECO:0007669"/>
    <property type="project" value="UniProtKB-UniRule"/>
</dbReference>
<dbReference type="GO" id="GO:0019545">
    <property type="term" value="P:arginine catabolic process to succinate"/>
    <property type="evidence" value="ECO:0007669"/>
    <property type="project" value="UniProtKB-UniRule"/>
</dbReference>
<dbReference type="Gene3D" id="2.40.40.20">
    <property type="match status" value="1"/>
</dbReference>
<dbReference type="HAMAP" id="MF_01171">
    <property type="entry name" value="AstA"/>
    <property type="match status" value="1"/>
</dbReference>
<dbReference type="InterPro" id="IPR016181">
    <property type="entry name" value="Acyl_CoA_acyltransferase"/>
</dbReference>
<dbReference type="InterPro" id="IPR007041">
    <property type="entry name" value="Arg_succinylTrfase_AstA/AruG"/>
</dbReference>
<dbReference type="InterPro" id="IPR017650">
    <property type="entry name" value="Arginine_N-succinylTrfase"/>
</dbReference>
<dbReference type="NCBIfam" id="TIGR03243">
    <property type="entry name" value="arg_catab_AOST"/>
    <property type="match status" value="1"/>
</dbReference>
<dbReference type="NCBIfam" id="TIGR03244">
    <property type="entry name" value="arg_catab_AstA"/>
    <property type="match status" value="1"/>
</dbReference>
<dbReference type="NCBIfam" id="NF007770">
    <property type="entry name" value="PRK10456.1"/>
    <property type="match status" value="1"/>
</dbReference>
<dbReference type="PANTHER" id="PTHR30420:SF1">
    <property type="entry name" value="ARGININE N-SUCCINYLTRANSFERASE"/>
    <property type="match status" value="1"/>
</dbReference>
<dbReference type="PANTHER" id="PTHR30420">
    <property type="entry name" value="N-SUCCINYLARGININE DIHYDROLASE"/>
    <property type="match status" value="1"/>
</dbReference>
<dbReference type="Pfam" id="PF04958">
    <property type="entry name" value="AstA"/>
    <property type="match status" value="1"/>
</dbReference>
<dbReference type="SUPFAM" id="SSF55729">
    <property type="entry name" value="Acyl-CoA N-acyltransferases (Nat)"/>
    <property type="match status" value="1"/>
</dbReference>